<protein>
    <recommendedName>
        <fullName evidence="1">ATP-dependent Clp protease ATP-binding subunit ClpX</fullName>
    </recommendedName>
</protein>
<comment type="function">
    <text evidence="1">ATP-dependent specificity component of the Clp protease. It directs the protease to specific substrates. Can perform chaperone functions in the absence of ClpP.</text>
</comment>
<comment type="subunit">
    <text evidence="1">Component of the ClpX-ClpP complex. Forms a hexameric ring that, in the presence of ATP, binds to fourteen ClpP subunits assembled into a disk-like structure with a central cavity, resembling the structure of eukaryotic proteasomes.</text>
</comment>
<comment type="similarity">
    <text evidence="1">Belongs to the ClpX chaperone family.</text>
</comment>
<name>CLPX_PICP2</name>
<organism>
    <name type="scientific">Picosynechococcus sp. (strain ATCC 27264 / PCC 7002 / PR-6)</name>
    <name type="common">Agmenellum quadruplicatum</name>
    <dbReference type="NCBI Taxonomy" id="32049"/>
    <lineage>
        <taxon>Bacteria</taxon>
        <taxon>Bacillati</taxon>
        <taxon>Cyanobacteriota</taxon>
        <taxon>Cyanophyceae</taxon>
        <taxon>Oscillatoriophycideae</taxon>
        <taxon>Chroococcales</taxon>
        <taxon>Geminocystaceae</taxon>
        <taxon>Picosynechococcus</taxon>
    </lineage>
</organism>
<sequence>MSKYDSHLKCSFCGKSQEQVRKLIAGPGVYICDECVELCNEILDEELMENAAGMGMGRSPEKNPPKAPPEKINFEDIPKPREIKHYLDEHVIGQDEAKKVLSVAVYNHYKRLSLMEDDDADPVADGIELHKSNILLIGPTGCGKTLLAQTLAKILDVPFAVADATTLTEAGYVGEDVENILLRLLQVADLDVAEAQRGIIYIDEIDKIARKSENPSITRDVSGEGVQQALLKMLEGTVANVPPQGGRKHPYQDCIQIDTRNILFICGGAFVGLDKVIERRVGKKSMGFVRPGEEGSAKEQRTAELLQHLSPEDLVKYGMIPEFIGRIPVIASLSPLDEEALVEILTQPKNALVKQYKKLLKMDSVQLEFEPTAIRAIAQEAYRRKTGARALRGIVEELMLDVMYELPSRKDVNRCTITPEMVEKRSTAELLLHPSSLPKPESA</sequence>
<proteinExistence type="inferred from homology"/>
<reference key="1">
    <citation type="submission" date="2008-02" db="EMBL/GenBank/DDBJ databases">
        <title>Complete sequence of Synechococcus sp. PCC 7002.</title>
        <authorList>
            <person name="Li T."/>
            <person name="Zhao J."/>
            <person name="Zhao C."/>
            <person name="Liu Z."/>
            <person name="Zhao F."/>
            <person name="Marquardt J."/>
            <person name="Nomura C.T."/>
            <person name="Persson S."/>
            <person name="Detter J.C."/>
            <person name="Richardson P.M."/>
            <person name="Lanz C."/>
            <person name="Schuster S.C."/>
            <person name="Wang J."/>
            <person name="Li S."/>
            <person name="Huang X."/>
            <person name="Cai T."/>
            <person name="Yu Z."/>
            <person name="Luo J."/>
            <person name="Zhao J."/>
            <person name="Bryant D.A."/>
        </authorList>
    </citation>
    <scope>NUCLEOTIDE SEQUENCE [LARGE SCALE GENOMIC DNA]</scope>
    <source>
        <strain>ATCC 27264 / PCC 7002 / PR-6</strain>
    </source>
</reference>
<accession>B1XN45</accession>
<feature type="chain" id="PRO_1000098010" description="ATP-dependent Clp protease ATP-binding subunit ClpX">
    <location>
        <begin position="1"/>
        <end position="443"/>
    </location>
</feature>
<feature type="domain" description="ClpX-type ZB" evidence="2">
    <location>
        <begin position="1"/>
        <end position="51"/>
    </location>
</feature>
<feature type="binding site" evidence="2">
    <location>
        <position position="10"/>
    </location>
    <ligand>
        <name>Zn(2+)</name>
        <dbReference type="ChEBI" id="CHEBI:29105"/>
    </ligand>
</feature>
<feature type="binding site" evidence="2">
    <location>
        <position position="13"/>
    </location>
    <ligand>
        <name>Zn(2+)</name>
        <dbReference type="ChEBI" id="CHEBI:29105"/>
    </ligand>
</feature>
<feature type="binding site" evidence="2">
    <location>
        <position position="32"/>
    </location>
    <ligand>
        <name>Zn(2+)</name>
        <dbReference type="ChEBI" id="CHEBI:29105"/>
    </ligand>
</feature>
<feature type="binding site" evidence="2">
    <location>
        <position position="35"/>
    </location>
    <ligand>
        <name>Zn(2+)</name>
        <dbReference type="ChEBI" id="CHEBI:29105"/>
    </ligand>
</feature>
<feature type="binding site" evidence="1">
    <location>
        <begin position="139"/>
        <end position="146"/>
    </location>
    <ligand>
        <name>ATP</name>
        <dbReference type="ChEBI" id="CHEBI:30616"/>
    </ligand>
</feature>
<dbReference type="EMBL" id="CP000951">
    <property type="protein sequence ID" value="ACA99525.1"/>
    <property type="molecule type" value="Genomic_DNA"/>
</dbReference>
<dbReference type="RefSeq" id="WP_012307148.1">
    <property type="nucleotide sequence ID" value="NZ_JAHHPU010000007.1"/>
</dbReference>
<dbReference type="SMR" id="B1XN45"/>
<dbReference type="STRING" id="32049.SYNPCC7002_A1534"/>
<dbReference type="KEGG" id="syp:SYNPCC7002_A1534"/>
<dbReference type="eggNOG" id="COG1219">
    <property type="taxonomic scope" value="Bacteria"/>
</dbReference>
<dbReference type="HOGENOM" id="CLU_014218_8_2_3"/>
<dbReference type="Proteomes" id="UP000001688">
    <property type="component" value="Chromosome"/>
</dbReference>
<dbReference type="GO" id="GO:0009376">
    <property type="term" value="C:HslUV protease complex"/>
    <property type="evidence" value="ECO:0007669"/>
    <property type="project" value="TreeGrafter"/>
</dbReference>
<dbReference type="GO" id="GO:0005524">
    <property type="term" value="F:ATP binding"/>
    <property type="evidence" value="ECO:0007669"/>
    <property type="project" value="UniProtKB-UniRule"/>
</dbReference>
<dbReference type="GO" id="GO:0016887">
    <property type="term" value="F:ATP hydrolysis activity"/>
    <property type="evidence" value="ECO:0007669"/>
    <property type="project" value="InterPro"/>
</dbReference>
<dbReference type="GO" id="GO:0140662">
    <property type="term" value="F:ATP-dependent protein folding chaperone"/>
    <property type="evidence" value="ECO:0007669"/>
    <property type="project" value="InterPro"/>
</dbReference>
<dbReference type="GO" id="GO:0046983">
    <property type="term" value="F:protein dimerization activity"/>
    <property type="evidence" value="ECO:0007669"/>
    <property type="project" value="InterPro"/>
</dbReference>
<dbReference type="GO" id="GO:0051082">
    <property type="term" value="F:unfolded protein binding"/>
    <property type="evidence" value="ECO:0007669"/>
    <property type="project" value="UniProtKB-UniRule"/>
</dbReference>
<dbReference type="GO" id="GO:0008270">
    <property type="term" value="F:zinc ion binding"/>
    <property type="evidence" value="ECO:0007669"/>
    <property type="project" value="InterPro"/>
</dbReference>
<dbReference type="GO" id="GO:0051301">
    <property type="term" value="P:cell division"/>
    <property type="evidence" value="ECO:0007669"/>
    <property type="project" value="TreeGrafter"/>
</dbReference>
<dbReference type="GO" id="GO:0051603">
    <property type="term" value="P:proteolysis involved in protein catabolic process"/>
    <property type="evidence" value="ECO:0007669"/>
    <property type="project" value="TreeGrafter"/>
</dbReference>
<dbReference type="CDD" id="cd19497">
    <property type="entry name" value="RecA-like_ClpX"/>
    <property type="match status" value="1"/>
</dbReference>
<dbReference type="FunFam" id="1.10.8.60:FF:000002">
    <property type="entry name" value="ATP-dependent Clp protease ATP-binding subunit ClpX"/>
    <property type="match status" value="1"/>
</dbReference>
<dbReference type="FunFam" id="3.40.50.300:FF:000005">
    <property type="entry name" value="ATP-dependent Clp protease ATP-binding subunit ClpX"/>
    <property type="match status" value="1"/>
</dbReference>
<dbReference type="Gene3D" id="1.10.8.60">
    <property type="match status" value="1"/>
</dbReference>
<dbReference type="Gene3D" id="6.20.220.10">
    <property type="entry name" value="ClpX chaperone, C4-type zinc finger domain"/>
    <property type="match status" value="1"/>
</dbReference>
<dbReference type="Gene3D" id="3.40.50.300">
    <property type="entry name" value="P-loop containing nucleotide triphosphate hydrolases"/>
    <property type="match status" value="1"/>
</dbReference>
<dbReference type="HAMAP" id="MF_00175">
    <property type="entry name" value="ClpX"/>
    <property type="match status" value="1"/>
</dbReference>
<dbReference type="InterPro" id="IPR003593">
    <property type="entry name" value="AAA+_ATPase"/>
</dbReference>
<dbReference type="InterPro" id="IPR050052">
    <property type="entry name" value="ATP-dep_Clp_protease_ClpX"/>
</dbReference>
<dbReference type="InterPro" id="IPR003959">
    <property type="entry name" value="ATPase_AAA_core"/>
</dbReference>
<dbReference type="InterPro" id="IPR019489">
    <property type="entry name" value="Clp_ATPase_C"/>
</dbReference>
<dbReference type="InterPro" id="IPR004487">
    <property type="entry name" value="Clp_protease_ATP-bd_su_ClpX"/>
</dbReference>
<dbReference type="InterPro" id="IPR046425">
    <property type="entry name" value="ClpX_bact"/>
</dbReference>
<dbReference type="InterPro" id="IPR027417">
    <property type="entry name" value="P-loop_NTPase"/>
</dbReference>
<dbReference type="InterPro" id="IPR010603">
    <property type="entry name" value="Znf_CppX_C4"/>
</dbReference>
<dbReference type="InterPro" id="IPR038366">
    <property type="entry name" value="Znf_CppX_C4_sf"/>
</dbReference>
<dbReference type="NCBIfam" id="TIGR00382">
    <property type="entry name" value="clpX"/>
    <property type="match status" value="1"/>
</dbReference>
<dbReference type="NCBIfam" id="NF003745">
    <property type="entry name" value="PRK05342.1"/>
    <property type="match status" value="1"/>
</dbReference>
<dbReference type="PANTHER" id="PTHR48102:SF7">
    <property type="entry name" value="ATP-DEPENDENT CLP PROTEASE ATP-BINDING SUBUNIT CLPX-LIKE, MITOCHONDRIAL"/>
    <property type="match status" value="1"/>
</dbReference>
<dbReference type="PANTHER" id="PTHR48102">
    <property type="entry name" value="ATP-DEPENDENT CLP PROTEASE ATP-BINDING SUBUNIT CLPX-LIKE, MITOCHONDRIAL-RELATED"/>
    <property type="match status" value="1"/>
</dbReference>
<dbReference type="Pfam" id="PF07724">
    <property type="entry name" value="AAA_2"/>
    <property type="match status" value="1"/>
</dbReference>
<dbReference type="Pfam" id="PF10431">
    <property type="entry name" value="ClpB_D2-small"/>
    <property type="match status" value="1"/>
</dbReference>
<dbReference type="Pfam" id="PF06689">
    <property type="entry name" value="zf-C4_ClpX"/>
    <property type="match status" value="1"/>
</dbReference>
<dbReference type="SMART" id="SM00382">
    <property type="entry name" value="AAA"/>
    <property type="match status" value="1"/>
</dbReference>
<dbReference type="SMART" id="SM01086">
    <property type="entry name" value="ClpB_D2-small"/>
    <property type="match status" value="1"/>
</dbReference>
<dbReference type="SMART" id="SM00994">
    <property type="entry name" value="zf-C4_ClpX"/>
    <property type="match status" value="1"/>
</dbReference>
<dbReference type="SUPFAM" id="SSF57716">
    <property type="entry name" value="Glucocorticoid receptor-like (DNA-binding domain)"/>
    <property type="match status" value="1"/>
</dbReference>
<dbReference type="SUPFAM" id="SSF52540">
    <property type="entry name" value="P-loop containing nucleoside triphosphate hydrolases"/>
    <property type="match status" value="1"/>
</dbReference>
<dbReference type="PROSITE" id="PS51902">
    <property type="entry name" value="CLPX_ZB"/>
    <property type="match status" value="1"/>
</dbReference>
<keyword id="KW-0067">ATP-binding</keyword>
<keyword id="KW-0143">Chaperone</keyword>
<keyword id="KW-0479">Metal-binding</keyword>
<keyword id="KW-0547">Nucleotide-binding</keyword>
<keyword id="KW-1185">Reference proteome</keyword>
<keyword id="KW-0862">Zinc</keyword>
<evidence type="ECO:0000255" key="1">
    <source>
        <dbReference type="HAMAP-Rule" id="MF_00175"/>
    </source>
</evidence>
<evidence type="ECO:0000255" key="2">
    <source>
        <dbReference type="PROSITE-ProRule" id="PRU01250"/>
    </source>
</evidence>
<gene>
    <name evidence="1" type="primary">clpX</name>
    <name type="ordered locus">SYNPCC7002_A1534</name>
</gene>